<gene>
    <name evidence="1" type="primary">dps</name>
    <name type="ordered locus">YPN_2105</name>
    <name type="ORF">YP516_2346</name>
</gene>
<feature type="chain" id="PRO_0000271600" description="DNA protection during starvation protein">
    <location>
        <begin position="1"/>
        <end position="167"/>
    </location>
</feature>
<feature type="binding site" evidence="1">
    <location>
        <position position="51"/>
    </location>
    <ligand>
        <name>Fe cation</name>
        <dbReference type="ChEBI" id="CHEBI:24875"/>
    </ligand>
</feature>
<feature type="binding site" evidence="1">
    <location>
        <position position="78"/>
    </location>
    <ligand>
        <name>Fe cation</name>
        <dbReference type="ChEBI" id="CHEBI:24875"/>
    </ligand>
</feature>
<feature type="binding site" evidence="1">
    <location>
        <position position="82"/>
    </location>
    <ligand>
        <name>Fe cation</name>
        <dbReference type="ChEBI" id="CHEBI:24875"/>
    </ligand>
</feature>
<protein>
    <recommendedName>
        <fullName evidence="1">DNA protection during starvation protein</fullName>
        <ecNumber evidence="1">1.16.-.-</ecNumber>
    </recommendedName>
</protein>
<comment type="function">
    <text evidence="1">During stationary phase, binds the chromosome non-specifically, forming a highly ordered and stable dps-DNA co-crystal within which chromosomal DNA is condensed and protected from diverse damages. It protects DNA from oxidative damage by sequestering intracellular Fe(2+) ion and storing it in the form of Fe(3+) oxyhydroxide mineral, which can be released after reduction. One hydrogen peroxide oxidizes two Fe(2+) ions, which prevents hydroxyl radical production by the Fenton reaction.</text>
</comment>
<comment type="catalytic activity">
    <reaction evidence="1">
        <text>2 Fe(2+) + H2O2 + 2 H(+) = 2 Fe(3+) + 2 H2O</text>
        <dbReference type="Rhea" id="RHEA:48712"/>
        <dbReference type="ChEBI" id="CHEBI:15377"/>
        <dbReference type="ChEBI" id="CHEBI:15378"/>
        <dbReference type="ChEBI" id="CHEBI:16240"/>
        <dbReference type="ChEBI" id="CHEBI:29033"/>
        <dbReference type="ChEBI" id="CHEBI:29034"/>
    </reaction>
</comment>
<comment type="subunit">
    <text evidence="1">Homododecamer. The 12 subunits form a hollow sphere into which the mineral iron core of up to 500 Fe(3+) can be deposited.</text>
</comment>
<comment type="subcellular location">
    <subcellularLocation>
        <location evidence="1">Cytoplasm</location>
    </subcellularLocation>
</comment>
<comment type="similarity">
    <text evidence="1">Belongs to the Dps family.</text>
</comment>
<organism>
    <name type="scientific">Yersinia pestis bv. Antiqua (strain Nepal516)</name>
    <dbReference type="NCBI Taxonomy" id="377628"/>
    <lineage>
        <taxon>Bacteria</taxon>
        <taxon>Pseudomonadati</taxon>
        <taxon>Pseudomonadota</taxon>
        <taxon>Gammaproteobacteria</taxon>
        <taxon>Enterobacterales</taxon>
        <taxon>Yersiniaceae</taxon>
        <taxon>Yersinia</taxon>
    </lineage>
</organism>
<sequence>MSTAKLVKTKPSELLYTRNDVEEHVKVATIKRLNQMVIQFIDLSLITKQAHWNMRGANFVAVHEMLDGFRTALTDHLDTFAERAVQLGGVALGTAQVINDKTPLKSYPTNIHSVQEHLKALAERYAIVANDIRKAITEVEDENSADMFTAASRDLDKFLWFIESNIE</sequence>
<dbReference type="EC" id="1.16.-.-" evidence="1"/>
<dbReference type="EMBL" id="CP000305">
    <property type="protein sequence ID" value="ABG18434.1"/>
    <property type="molecule type" value="Genomic_DNA"/>
</dbReference>
<dbReference type="EMBL" id="ACNQ01000013">
    <property type="protein sequence ID" value="EEO76149.1"/>
    <property type="molecule type" value="Genomic_DNA"/>
</dbReference>
<dbReference type="RefSeq" id="WP_002210233.1">
    <property type="nucleotide sequence ID" value="NZ_ACNQ01000013.1"/>
</dbReference>
<dbReference type="SMR" id="Q1CHU6"/>
<dbReference type="GeneID" id="57976175"/>
<dbReference type="KEGG" id="ypn:YPN_2105"/>
<dbReference type="HOGENOM" id="CLU_098183_1_2_6"/>
<dbReference type="Proteomes" id="UP000008936">
    <property type="component" value="Chromosome"/>
</dbReference>
<dbReference type="GO" id="GO:0005737">
    <property type="term" value="C:cytoplasm"/>
    <property type="evidence" value="ECO:0007669"/>
    <property type="project" value="UniProtKB-SubCell"/>
</dbReference>
<dbReference type="GO" id="GO:0003677">
    <property type="term" value="F:DNA binding"/>
    <property type="evidence" value="ECO:0007669"/>
    <property type="project" value="UniProtKB-UniRule"/>
</dbReference>
<dbReference type="GO" id="GO:0008199">
    <property type="term" value="F:ferric iron binding"/>
    <property type="evidence" value="ECO:0007669"/>
    <property type="project" value="UniProtKB-UniRule"/>
</dbReference>
<dbReference type="GO" id="GO:0016722">
    <property type="term" value="F:oxidoreductase activity, acting on metal ions"/>
    <property type="evidence" value="ECO:0007669"/>
    <property type="project" value="InterPro"/>
</dbReference>
<dbReference type="GO" id="GO:0030261">
    <property type="term" value="P:chromosome condensation"/>
    <property type="evidence" value="ECO:0007669"/>
    <property type="project" value="UniProtKB-KW"/>
</dbReference>
<dbReference type="GO" id="GO:0006879">
    <property type="term" value="P:intracellular iron ion homeostasis"/>
    <property type="evidence" value="ECO:0007669"/>
    <property type="project" value="UniProtKB-KW"/>
</dbReference>
<dbReference type="CDD" id="cd01043">
    <property type="entry name" value="DPS"/>
    <property type="match status" value="1"/>
</dbReference>
<dbReference type="Gene3D" id="1.20.1260.10">
    <property type="match status" value="1"/>
</dbReference>
<dbReference type="HAMAP" id="MF_01441">
    <property type="entry name" value="Dps"/>
    <property type="match status" value="1"/>
</dbReference>
<dbReference type="InterPro" id="IPR002177">
    <property type="entry name" value="DPS_DNA-bd"/>
</dbReference>
<dbReference type="InterPro" id="IPR023188">
    <property type="entry name" value="DPS_DNA-bd_CS"/>
</dbReference>
<dbReference type="InterPro" id="IPR023067">
    <property type="entry name" value="Dps_gammaproteobac"/>
</dbReference>
<dbReference type="InterPro" id="IPR012347">
    <property type="entry name" value="Ferritin-like"/>
</dbReference>
<dbReference type="InterPro" id="IPR009078">
    <property type="entry name" value="Ferritin-like_SF"/>
</dbReference>
<dbReference type="InterPro" id="IPR008331">
    <property type="entry name" value="Ferritin_DPS_dom"/>
</dbReference>
<dbReference type="NCBIfam" id="NF006975">
    <property type="entry name" value="PRK09448.1"/>
    <property type="match status" value="1"/>
</dbReference>
<dbReference type="PANTHER" id="PTHR42932:SF3">
    <property type="entry name" value="DNA PROTECTION DURING STARVATION PROTEIN"/>
    <property type="match status" value="1"/>
</dbReference>
<dbReference type="PANTHER" id="PTHR42932">
    <property type="entry name" value="GENERAL STRESS PROTEIN 20U"/>
    <property type="match status" value="1"/>
</dbReference>
<dbReference type="Pfam" id="PF00210">
    <property type="entry name" value="Ferritin"/>
    <property type="match status" value="1"/>
</dbReference>
<dbReference type="PIRSF" id="PIRSF005900">
    <property type="entry name" value="Dps"/>
    <property type="match status" value="1"/>
</dbReference>
<dbReference type="PRINTS" id="PR01346">
    <property type="entry name" value="HELNAPAPROT"/>
</dbReference>
<dbReference type="SUPFAM" id="SSF47240">
    <property type="entry name" value="Ferritin-like"/>
    <property type="match status" value="1"/>
</dbReference>
<dbReference type="PROSITE" id="PS00818">
    <property type="entry name" value="DPS_1"/>
    <property type="match status" value="1"/>
</dbReference>
<proteinExistence type="inferred from homology"/>
<reference key="1">
    <citation type="journal article" date="2006" name="J. Bacteriol.">
        <title>Complete genome sequence of Yersinia pestis strains Antiqua and Nepal516: evidence of gene reduction in an emerging pathogen.</title>
        <authorList>
            <person name="Chain P.S.G."/>
            <person name="Hu P."/>
            <person name="Malfatti S.A."/>
            <person name="Radnedge L."/>
            <person name="Larimer F."/>
            <person name="Vergez L.M."/>
            <person name="Worsham P."/>
            <person name="Chu M.C."/>
            <person name="Andersen G.L."/>
        </authorList>
    </citation>
    <scope>NUCLEOTIDE SEQUENCE [LARGE SCALE GENOMIC DNA]</scope>
    <source>
        <strain>Nepal516</strain>
    </source>
</reference>
<reference key="2">
    <citation type="submission" date="2009-04" db="EMBL/GenBank/DDBJ databases">
        <title>Yersinia pestis Nepal516A whole genome shotgun sequencing project.</title>
        <authorList>
            <person name="Plunkett G. III"/>
            <person name="Anderson B.D."/>
            <person name="Baumler D.J."/>
            <person name="Burland V."/>
            <person name="Cabot E.L."/>
            <person name="Glasner J.D."/>
            <person name="Mau B."/>
            <person name="Neeno-Eckwall E."/>
            <person name="Perna N.T."/>
            <person name="Munk A.C."/>
            <person name="Tapia R."/>
            <person name="Green L.D."/>
            <person name="Rogers Y.C."/>
            <person name="Detter J.C."/>
            <person name="Bruce D.C."/>
            <person name="Brettin T.S."/>
        </authorList>
    </citation>
    <scope>NUCLEOTIDE SEQUENCE [LARGE SCALE GENOMIC DNA]</scope>
    <source>
        <strain>Nepal516</strain>
    </source>
</reference>
<name>DPS_YERPN</name>
<keyword id="KW-0963">Cytoplasm</keyword>
<keyword id="KW-0226">DNA condensation</keyword>
<keyword id="KW-0238">DNA-binding</keyword>
<keyword id="KW-0408">Iron</keyword>
<keyword id="KW-0409">Iron storage</keyword>
<keyword id="KW-0479">Metal-binding</keyword>
<keyword id="KW-0560">Oxidoreductase</keyword>
<evidence type="ECO:0000255" key="1">
    <source>
        <dbReference type="HAMAP-Rule" id="MF_01441"/>
    </source>
</evidence>
<accession>Q1CHU6</accession>
<accession>C4GV21</accession>